<sequence length="474" mass="50268">MAGRTLYDKLWDDHVVSQRDDGSSLIYIDRHIVHEVTSPQAFEGLRIAGRKPWRTDSVIATPDHNVPTTFNERASGVDGIADPISKIQVKTLDDNCDELGIVEFKINDNRQGIVHVVGPETGGCLPGMTIVCGDSHTSTNGALGALSFGIGTSEVEHVLATQCLVAKKMKNMLIKVDGQLGQGVTAKDVVLAIIAKIGTAGGTGFAIEFGGDVFRAMSMEGRLTVCNMAIEAGARAGMVAVDEITLDYVKGRAFAPKGDHWAMAEARWRELHSDADAVFDEVVELDGAQIKPQVSWGTSPEMVLPVDGVIPDPAQESDGVKAAGVARALEYMGLTPGQKITDIAVDRVFIGSCTNSRIEDIRAAAKVVAGKTKAASVKEAIVVPGSGAVKAEAEAEGLDKIFTAANIEWREPGCSMCLAMNADRLGEGEHCASTSNRNFEGRQGYGGRTHLVSPAMAAAAAISGHFVDIRDWQS</sequence>
<comment type="function">
    <text evidence="1">Catalyzes the isomerization between 2-isopropylmalate and 3-isopropylmalate, via the formation of 2-isopropylmaleate.</text>
</comment>
<comment type="catalytic activity">
    <reaction evidence="1">
        <text>(2R,3S)-3-isopropylmalate = (2S)-2-isopropylmalate</text>
        <dbReference type="Rhea" id="RHEA:32287"/>
        <dbReference type="ChEBI" id="CHEBI:1178"/>
        <dbReference type="ChEBI" id="CHEBI:35121"/>
        <dbReference type="EC" id="4.2.1.33"/>
    </reaction>
</comment>
<comment type="cofactor">
    <cofactor evidence="1">
        <name>[4Fe-4S] cluster</name>
        <dbReference type="ChEBI" id="CHEBI:49883"/>
    </cofactor>
    <text evidence="1">Binds 1 [4Fe-4S] cluster per subunit.</text>
</comment>
<comment type="pathway">
    <text evidence="1">Amino-acid biosynthesis; L-leucine biosynthesis; L-leucine from 3-methyl-2-oxobutanoate: step 2/4.</text>
</comment>
<comment type="subunit">
    <text evidence="1">Heterodimer of LeuC and LeuD.</text>
</comment>
<comment type="similarity">
    <text evidence="1">Belongs to the aconitase/IPM isomerase family. LeuC type 1 subfamily.</text>
</comment>
<name>LEUC_TERTT</name>
<keyword id="KW-0004">4Fe-4S</keyword>
<keyword id="KW-0028">Amino-acid biosynthesis</keyword>
<keyword id="KW-0100">Branched-chain amino acid biosynthesis</keyword>
<keyword id="KW-0408">Iron</keyword>
<keyword id="KW-0411">Iron-sulfur</keyword>
<keyword id="KW-0432">Leucine biosynthesis</keyword>
<keyword id="KW-0456">Lyase</keyword>
<keyword id="KW-0479">Metal-binding</keyword>
<keyword id="KW-1185">Reference proteome</keyword>
<dbReference type="EC" id="4.2.1.33" evidence="1"/>
<dbReference type="EMBL" id="CP001614">
    <property type="protein sequence ID" value="ACR11247.1"/>
    <property type="molecule type" value="Genomic_DNA"/>
</dbReference>
<dbReference type="RefSeq" id="WP_015817359.1">
    <property type="nucleotide sequence ID" value="NC_012997.1"/>
</dbReference>
<dbReference type="SMR" id="C5BL66"/>
<dbReference type="STRING" id="377629.TERTU_2502"/>
<dbReference type="KEGG" id="ttu:TERTU_2502"/>
<dbReference type="eggNOG" id="COG0065">
    <property type="taxonomic scope" value="Bacteria"/>
</dbReference>
<dbReference type="HOGENOM" id="CLU_006714_3_4_6"/>
<dbReference type="OrthoDB" id="9802769at2"/>
<dbReference type="UniPathway" id="UPA00048">
    <property type="reaction ID" value="UER00071"/>
</dbReference>
<dbReference type="Proteomes" id="UP000009080">
    <property type="component" value="Chromosome"/>
</dbReference>
<dbReference type="GO" id="GO:0003861">
    <property type="term" value="F:3-isopropylmalate dehydratase activity"/>
    <property type="evidence" value="ECO:0007669"/>
    <property type="project" value="UniProtKB-UniRule"/>
</dbReference>
<dbReference type="GO" id="GO:0051539">
    <property type="term" value="F:4 iron, 4 sulfur cluster binding"/>
    <property type="evidence" value="ECO:0007669"/>
    <property type="project" value="UniProtKB-KW"/>
</dbReference>
<dbReference type="GO" id="GO:0046872">
    <property type="term" value="F:metal ion binding"/>
    <property type="evidence" value="ECO:0007669"/>
    <property type="project" value="UniProtKB-KW"/>
</dbReference>
<dbReference type="GO" id="GO:0009098">
    <property type="term" value="P:L-leucine biosynthetic process"/>
    <property type="evidence" value="ECO:0007669"/>
    <property type="project" value="UniProtKB-UniRule"/>
</dbReference>
<dbReference type="CDD" id="cd01583">
    <property type="entry name" value="IPMI"/>
    <property type="match status" value="1"/>
</dbReference>
<dbReference type="FunFam" id="3.30.499.10:FF:000007">
    <property type="entry name" value="3-isopropylmalate dehydratase large subunit"/>
    <property type="match status" value="1"/>
</dbReference>
<dbReference type="Gene3D" id="3.30.499.10">
    <property type="entry name" value="Aconitase, domain 3"/>
    <property type="match status" value="2"/>
</dbReference>
<dbReference type="HAMAP" id="MF_01026">
    <property type="entry name" value="LeuC_type1"/>
    <property type="match status" value="1"/>
</dbReference>
<dbReference type="InterPro" id="IPR004430">
    <property type="entry name" value="3-IsopropMal_deHydase_lsu"/>
</dbReference>
<dbReference type="InterPro" id="IPR015931">
    <property type="entry name" value="Acnase/IPM_dHydase_lsu_aba_1/3"/>
</dbReference>
<dbReference type="InterPro" id="IPR001030">
    <property type="entry name" value="Acoase/IPM_deHydtase_lsu_aba"/>
</dbReference>
<dbReference type="InterPro" id="IPR018136">
    <property type="entry name" value="Aconitase_4Fe-4S_BS"/>
</dbReference>
<dbReference type="InterPro" id="IPR036008">
    <property type="entry name" value="Aconitase_4Fe-4S_dom"/>
</dbReference>
<dbReference type="InterPro" id="IPR050067">
    <property type="entry name" value="IPM_dehydratase_rel_enz"/>
</dbReference>
<dbReference type="InterPro" id="IPR033941">
    <property type="entry name" value="IPMI_cat"/>
</dbReference>
<dbReference type="NCBIfam" id="TIGR00170">
    <property type="entry name" value="leuC"/>
    <property type="match status" value="1"/>
</dbReference>
<dbReference type="NCBIfam" id="NF004016">
    <property type="entry name" value="PRK05478.1"/>
    <property type="match status" value="1"/>
</dbReference>
<dbReference type="NCBIfam" id="NF009116">
    <property type="entry name" value="PRK12466.1"/>
    <property type="match status" value="1"/>
</dbReference>
<dbReference type="PANTHER" id="PTHR43822:SF9">
    <property type="entry name" value="3-ISOPROPYLMALATE DEHYDRATASE"/>
    <property type="match status" value="1"/>
</dbReference>
<dbReference type="PANTHER" id="PTHR43822">
    <property type="entry name" value="HOMOACONITASE, MITOCHONDRIAL-RELATED"/>
    <property type="match status" value="1"/>
</dbReference>
<dbReference type="Pfam" id="PF00330">
    <property type="entry name" value="Aconitase"/>
    <property type="match status" value="1"/>
</dbReference>
<dbReference type="PRINTS" id="PR00415">
    <property type="entry name" value="ACONITASE"/>
</dbReference>
<dbReference type="SUPFAM" id="SSF53732">
    <property type="entry name" value="Aconitase iron-sulfur domain"/>
    <property type="match status" value="1"/>
</dbReference>
<dbReference type="PROSITE" id="PS00450">
    <property type="entry name" value="ACONITASE_1"/>
    <property type="match status" value="1"/>
</dbReference>
<reference key="1">
    <citation type="journal article" date="2009" name="PLoS ONE">
        <title>The complete genome of Teredinibacter turnerae T7901: an intracellular endosymbiont of marine wood-boring bivalves (shipworms).</title>
        <authorList>
            <person name="Yang J.C."/>
            <person name="Madupu R."/>
            <person name="Durkin A.S."/>
            <person name="Ekborg N.A."/>
            <person name="Pedamallu C.S."/>
            <person name="Hostetler J.B."/>
            <person name="Radune D."/>
            <person name="Toms B.S."/>
            <person name="Henrissat B."/>
            <person name="Coutinho P.M."/>
            <person name="Schwarz S."/>
            <person name="Field L."/>
            <person name="Trindade-Silva A.E."/>
            <person name="Soares C.A.G."/>
            <person name="Elshahawi S."/>
            <person name="Hanora A."/>
            <person name="Schmidt E.W."/>
            <person name="Haygood M.G."/>
            <person name="Posfai J."/>
            <person name="Benner J."/>
            <person name="Madinger C."/>
            <person name="Nove J."/>
            <person name="Anton B."/>
            <person name="Chaudhary K."/>
            <person name="Foster J."/>
            <person name="Holman A."/>
            <person name="Kumar S."/>
            <person name="Lessard P.A."/>
            <person name="Luyten Y.A."/>
            <person name="Slatko B."/>
            <person name="Wood N."/>
            <person name="Wu B."/>
            <person name="Teplitski M."/>
            <person name="Mougous J.D."/>
            <person name="Ward N."/>
            <person name="Eisen J.A."/>
            <person name="Badger J.H."/>
            <person name="Distel D.L."/>
        </authorList>
    </citation>
    <scope>NUCLEOTIDE SEQUENCE [LARGE SCALE GENOMIC DNA]</scope>
    <source>
        <strain>ATCC 39867 / T7901</strain>
    </source>
</reference>
<proteinExistence type="inferred from homology"/>
<accession>C5BL66</accession>
<protein>
    <recommendedName>
        <fullName evidence="1">3-isopropylmalate dehydratase large subunit</fullName>
        <ecNumber evidence="1">4.2.1.33</ecNumber>
    </recommendedName>
    <alternativeName>
        <fullName evidence="1">Alpha-IPM isomerase</fullName>
        <shortName evidence="1">IPMI</shortName>
    </alternativeName>
    <alternativeName>
        <fullName evidence="1">Isopropylmalate isomerase</fullName>
    </alternativeName>
</protein>
<evidence type="ECO:0000255" key="1">
    <source>
        <dbReference type="HAMAP-Rule" id="MF_01026"/>
    </source>
</evidence>
<feature type="chain" id="PRO_1000213331" description="3-isopropylmalate dehydratase large subunit">
    <location>
        <begin position="1"/>
        <end position="474"/>
    </location>
</feature>
<feature type="binding site" evidence="1">
    <location>
        <position position="353"/>
    </location>
    <ligand>
        <name>[4Fe-4S] cluster</name>
        <dbReference type="ChEBI" id="CHEBI:49883"/>
    </ligand>
</feature>
<feature type="binding site" evidence="1">
    <location>
        <position position="414"/>
    </location>
    <ligand>
        <name>[4Fe-4S] cluster</name>
        <dbReference type="ChEBI" id="CHEBI:49883"/>
    </ligand>
</feature>
<feature type="binding site" evidence="1">
    <location>
        <position position="417"/>
    </location>
    <ligand>
        <name>[4Fe-4S] cluster</name>
        <dbReference type="ChEBI" id="CHEBI:49883"/>
    </ligand>
</feature>
<organism>
    <name type="scientific">Teredinibacter turnerae (strain ATCC 39867 / T7901)</name>
    <dbReference type="NCBI Taxonomy" id="377629"/>
    <lineage>
        <taxon>Bacteria</taxon>
        <taxon>Pseudomonadati</taxon>
        <taxon>Pseudomonadota</taxon>
        <taxon>Gammaproteobacteria</taxon>
        <taxon>Cellvibrionales</taxon>
        <taxon>Cellvibrionaceae</taxon>
        <taxon>Teredinibacter</taxon>
    </lineage>
</organism>
<gene>
    <name evidence="1" type="primary">leuC</name>
    <name type="ordered locus">TERTU_2502</name>
</gene>